<sequence length="734" mass="79513">MNSKVSSPTLLEALSSDFLACKICLEQLHTPKTLPCLHTYCQDCLAQLDIGGQVRCPECREIVPVPAEGVAAFKTNFFVNGLLDLVKARAPGDVHSGKPTCALCPLVGGKSSGGPATARCLDCADDLCQACADGHRCSRQTHKHRVVDLVGYRAGWYDEEARERQASQCPQHPGEALCFLCQPCSQLLCKDCRLGPHIDHPCLPLAEAVRSRKPGLEELLAGVDSNLVELEATRVAEKEALALLREQAASVGTQVEEAAERILKSLLAQKQEVLGQLRALVEAAEEATRERLTKIERQEQVAKAAAAFARRVLSLGLEAEILSLEGAITQRLRQLQDAPWTSGPTRCVLPQLELHPGLEDKNCHLLRLIFEEPKQSPKDSGKGGAGTQGGDEAQGQGDDRTKIGKQGGAQPLTPKEGKDQNPQEDDGVFIERGNRPNKKKKCKGRGKSVSREPSPILRPNLEGSGLLPRPVFSWSFPTRMPGDKRSPRITGLCPYGPQEILVADEQNRVLKRFSLNGDYKGTVQVPEGCSPCSVAALQNAVAFSANAKLYLVSPDGEIQWRRSLSLTQSSHAVAAMPCGDRVAVSVAGHVEVYKKDGSLATRFIPGGKASRGQRALVFLTTSPQGNFVGSDWQQNSVVFCDGLGQVIWEYKGPGLHGCQPGSVSVDKKGYIFLTLREVNKVVILDPKGSLLGDFLTAYHGLEKPRVTTMVDGKYLVVSLSNGTIHVFRVRFPDS</sequence>
<evidence type="ECO:0000250" key="1">
    <source>
        <dbReference type="UniProtKB" id="Q9BRZ2"/>
    </source>
</evidence>
<evidence type="ECO:0000255" key="2"/>
<evidence type="ECO:0000255" key="3">
    <source>
        <dbReference type="PROSITE-ProRule" id="PRU00024"/>
    </source>
</evidence>
<evidence type="ECO:0000255" key="4">
    <source>
        <dbReference type="PROSITE-ProRule" id="PRU00175"/>
    </source>
</evidence>
<evidence type="ECO:0000256" key="5">
    <source>
        <dbReference type="SAM" id="MobiDB-lite"/>
    </source>
</evidence>
<evidence type="ECO:0000269" key="6">
    <source>
    </source>
</evidence>
<evidence type="ECO:0000269" key="7">
    <source>
    </source>
</evidence>
<evidence type="ECO:0000303" key="8">
    <source>
    </source>
</evidence>
<evidence type="ECO:0000305" key="9"/>
<evidence type="ECO:0000312" key="10">
    <source>
        <dbReference type="MGI" id="MGI:2685298"/>
    </source>
</evidence>
<evidence type="ECO:0007829" key="11">
    <source>
        <dbReference type="PDB" id="8FXF"/>
    </source>
</evidence>
<reference key="1">
    <citation type="journal article" date="2005" name="Science">
        <title>The transcriptional landscape of the mammalian genome.</title>
        <authorList>
            <person name="Carninci P."/>
            <person name="Kasukawa T."/>
            <person name="Katayama S."/>
            <person name="Gough J."/>
            <person name="Frith M.C."/>
            <person name="Maeda N."/>
            <person name="Oyama R."/>
            <person name="Ravasi T."/>
            <person name="Lenhard B."/>
            <person name="Wells C."/>
            <person name="Kodzius R."/>
            <person name="Shimokawa K."/>
            <person name="Bajic V.B."/>
            <person name="Brenner S.E."/>
            <person name="Batalov S."/>
            <person name="Forrest A.R."/>
            <person name="Zavolan M."/>
            <person name="Davis M.J."/>
            <person name="Wilming L.G."/>
            <person name="Aidinis V."/>
            <person name="Allen J.E."/>
            <person name="Ambesi-Impiombato A."/>
            <person name="Apweiler R."/>
            <person name="Aturaliya R.N."/>
            <person name="Bailey T.L."/>
            <person name="Bansal M."/>
            <person name="Baxter L."/>
            <person name="Beisel K.W."/>
            <person name="Bersano T."/>
            <person name="Bono H."/>
            <person name="Chalk A.M."/>
            <person name="Chiu K.P."/>
            <person name="Choudhary V."/>
            <person name="Christoffels A."/>
            <person name="Clutterbuck D.R."/>
            <person name="Crowe M.L."/>
            <person name="Dalla E."/>
            <person name="Dalrymple B.P."/>
            <person name="de Bono B."/>
            <person name="Della Gatta G."/>
            <person name="di Bernardo D."/>
            <person name="Down T."/>
            <person name="Engstrom P."/>
            <person name="Fagiolini M."/>
            <person name="Faulkner G."/>
            <person name="Fletcher C.F."/>
            <person name="Fukushima T."/>
            <person name="Furuno M."/>
            <person name="Futaki S."/>
            <person name="Gariboldi M."/>
            <person name="Georgii-Hemming P."/>
            <person name="Gingeras T.R."/>
            <person name="Gojobori T."/>
            <person name="Green R.E."/>
            <person name="Gustincich S."/>
            <person name="Harbers M."/>
            <person name="Hayashi Y."/>
            <person name="Hensch T.K."/>
            <person name="Hirokawa N."/>
            <person name="Hill D."/>
            <person name="Huminiecki L."/>
            <person name="Iacono M."/>
            <person name="Ikeo K."/>
            <person name="Iwama A."/>
            <person name="Ishikawa T."/>
            <person name="Jakt M."/>
            <person name="Kanapin A."/>
            <person name="Katoh M."/>
            <person name="Kawasawa Y."/>
            <person name="Kelso J."/>
            <person name="Kitamura H."/>
            <person name="Kitano H."/>
            <person name="Kollias G."/>
            <person name="Krishnan S.P."/>
            <person name="Kruger A."/>
            <person name="Kummerfeld S.K."/>
            <person name="Kurochkin I.V."/>
            <person name="Lareau L.F."/>
            <person name="Lazarevic D."/>
            <person name="Lipovich L."/>
            <person name="Liu J."/>
            <person name="Liuni S."/>
            <person name="McWilliam S."/>
            <person name="Madan Babu M."/>
            <person name="Madera M."/>
            <person name="Marchionni L."/>
            <person name="Matsuda H."/>
            <person name="Matsuzawa S."/>
            <person name="Miki H."/>
            <person name="Mignone F."/>
            <person name="Miyake S."/>
            <person name="Morris K."/>
            <person name="Mottagui-Tabar S."/>
            <person name="Mulder N."/>
            <person name="Nakano N."/>
            <person name="Nakauchi H."/>
            <person name="Ng P."/>
            <person name="Nilsson R."/>
            <person name="Nishiguchi S."/>
            <person name="Nishikawa S."/>
            <person name="Nori F."/>
            <person name="Ohara O."/>
            <person name="Okazaki Y."/>
            <person name="Orlando V."/>
            <person name="Pang K.C."/>
            <person name="Pavan W.J."/>
            <person name="Pavesi G."/>
            <person name="Pesole G."/>
            <person name="Petrovsky N."/>
            <person name="Piazza S."/>
            <person name="Reed J."/>
            <person name="Reid J.F."/>
            <person name="Ring B.Z."/>
            <person name="Ringwald M."/>
            <person name="Rost B."/>
            <person name="Ruan Y."/>
            <person name="Salzberg S.L."/>
            <person name="Sandelin A."/>
            <person name="Schneider C."/>
            <person name="Schoenbach C."/>
            <person name="Sekiguchi K."/>
            <person name="Semple C.A."/>
            <person name="Seno S."/>
            <person name="Sessa L."/>
            <person name="Sheng Y."/>
            <person name="Shibata Y."/>
            <person name="Shimada H."/>
            <person name="Shimada K."/>
            <person name="Silva D."/>
            <person name="Sinclair B."/>
            <person name="Sperling S."/>
            <person name="Stupka E."/>
            <person name="Sugiura K."/>
            <person name="Sultana R."/>
            <person name="Takenaka Y."/>
            <person name="Taki K."/>
            <person name="Tammoja K."/>
            <person name="Tan S.L."/>
            <person name="Tang S."/>
            <person name="Taylor M.S."/>
            <person name="Tegner J."/>
            <person name="Teichmann S.A."/>
            <person name="Ueda H.R."/>
            <person name="van Nimwegen E."/>
            <person name="Verardo R."/>
            <person name="Wei C.L."/>
            <person name="Yagi K."/>
            <person name="Yamanishi H."/>
            <person name="Zabarovsky E."/>
            <person name="Zhu S."/>
            <person name="Zimmer A."/>
            <person name="Hide W."/>
            <person name="Bult C."/>
            <person name="Grimmond S.M."/>
            <person name="Teasdale R.D."/>
            <person name="Liu E.T."/>
            <person name="Brusic V."/>
            <person name="Quackenbush J."/>
            <person name="Wahlestedt C."/>
            <person name="Mattick J.S."/>
            <person name="Hume D.A."/>
            <person name="Kai C."/>
            <person name="Sasaki D."/>
            <person name="Tomaru Y."/>
            <person name="Fukuda S."/>
            <person name="Kanamori-Katayama M."/>
            <person name="Suzuki M."/>
            <person name="Aoki J."/>
            <person name="Arakawa T."/>
            <person name="Iida J."/>
            <person name="Imamura K."/>
            <person name="Itoh M."/>
            <person name="Kato T."/>
            <person name="Kawaji H."/>
            <person name="Kawagashira N."/>
            <person name="Kawashima T."/>
            <person name="Kojima M."/>
            <person name="Kondo S."/>
            <person name="Konno H."/>
            <person name="Nakano K."/>
            <person name="Ninomiya N."/>
            <person name="Nishio T."/>
            <person name="Okada M."/>
            <person name="Plessy C."/>
            <person name="Shibata K."/>
            <person name="Shiraki T."/>
            <person name="Suzuki S."/>
            <person name="Tagami M."/>
            <person name="Waki K."/>
            <person name="Watahiki A."/>
            <person name="Okamura-Oho Y."/>
            <person name="Suzuki H."/>
            <person name="Kawai J."/>
            <person name="Hayashizaki Y."/>
        </authorList>
    </citation>
    <scope>NUCLEOTIDE SEQUENCE [LARGE SCALE MRNA]</scope>
    <source>
        <strain>C57BL/6J</strain>
        <tissue>Thymus</tissue>
    </source>
</reference>
<reference key="2">
    <citation type="journal article" date="2004" name="Genome Res.">
        <title>The status, quality, and expansion of the NIH full-length cDNA project: the Mammalian Gene Collection (MGC).</title>
        <authorList>
            <consortium name="The MGC Project Team"/>
        </authorList>
    </citation>
    <scope>NUCLEOTIDE SEQUENCE [LARGE SCALE MRNA]</scope>
    <source>
        <strain>FVB/N</strain>
        <tissue>Mammary tumor</tissue>
    </source>
</reference>
<reference key="3">
    <citation type="journal article" date="2010" name="Cell">
        <title>A tissue-specific atlas of mouse protein phosphorylation and expression.</title>
        <authorList>
            <person name="Huttlin E.L."/>
            <person name="Jedrychowski M.P."/>
            <person name="Elias J.E."/>
            <person name="Goswami T."/>
            <person name="Rad R."/>
            <person name="Beausoleil S.A."/>
            <person name="Villen J."/>
            <person name="Haas W."/>
            <person name="Sowa M.E."/>
            <person name="Gygi S.P."/>
        </authorList>
    </citation>
    <scope>IDENTIFICATION BY MASS SPECTROMETRY [LARGE SCALE ANALYSIS]</scope>
    <source>
        <tissue>Lung</tissue>
        <tissue>Pancreas</tissue>
        <tissue>Spleen</tissue>
    </source>
</reference>
<reference key="4">
    <citation type="journal article" date="2010" name="Immunity">
        <title>The ubiquitin ligase TRIM56 regulates innate immune responses to intracellular double-stranded DNA.</title>
        <authorList>
            <person name="Tsuchida T."/>
            <person name="Zou J."/>
            <person name="Saitoh T."/>
            <person name="Kumar H."/>
            <person name="Abe T."/>
            <person name="Matsuura Y."/>
            <person name="Kawai T."/>
            <person name="Akira S."/>
        </authorList>
    </citation>
    <scope>FUNCTION</scope>
    <scope>SUBCELLULAR LOCATION</scope>
    <scope>INTERACTION WITH STING1</scope>
    <scope>INDUCTION</scope>
</reference>
<reference key="5">
    <citation type="journal article" date="2018" name="Nat. Commun.">
        <title>TRIM56-mediated monoubiquitination of cGAS for cytosolic DNA sensing.</title>
        <authorList>
            <person name="Seo G.J."/>
            <person name="Kim C."/>
            <person name="Shin W.J."/>
            <person name="Sklan E.H."/>
            <person name="Eoh H."/>
            <person name="Jung J.U."/>
        </authorList>
    </citation>
    <scope>FUNCTION</scope>
    <scope>CATALYTIC ACTIVITY</scope>
    <scope>PATHWAY</scope>
    <scope>DISRUPTION PHENOTYPE</scope>
</reference>
<comment type="function">
    <text evidence="1 6 7">E3 ubiquitin-protein ligase that plays a key role in innate antiviral immunity by mediating ubiquitination of CGAS and STING1 (PubMed:21074459, PubMed:29426904). In response to pathogen- and host-derived double-stranded DNA (dsDNA), targets STING1 to 'Lys-63'-linked ubiquitination, thereby promoting its homodimerization, a step required for the production of type I interferon IFN-beta (PubMed:21074459). Also mediates monoubiquitination of CGAS, thereby promoting CGAS oligomerization and subsequent activation (PubMed:29426904). Independently of its E3 ubiquitin ligase activity, positive regulator of TLR3 signaling (By similarity). Potentiates extracellular double stranded RNA (dsRNA)-induced expression of IFNB1 and interferon-stimulated genes ISG15, IFIT1/ISG56, CXCL10, OASL and CCL5/RANTES (By similarity).</text>
</comment>
<comment type="catalytic activity">
    <reaction evidence="6 7">
        <text>S-ubiquitinyl-[E2 ubiquitin-conjugating enzyme]-L-cysteine + [acceptor protein]-L-lysine = [E2 ubiquitin-conjugating enzyme]-L-cysteine + N(6)-ubiquitinyl-[acceptor protein]-L-lysine.</text>
        <dbReference type="EC" id="2.3.2.27"/>
    </reaction>
</comment>
<comment type="pathway">
    <text evidence="6 7">Protein modification; protein ubiquitination.</text>
</comment>
<comment type="subunit">
    <text evidence="1 6">Interacts with STING1 (PubMed:21074459). Interacts with TICAM1 (By similarity).</text>
</comment>
<comment type="subcellular location">
    <subcellularLocation>
        <location evidence="6">Cytoplasm</location>
    </subcellularLocation>
</comment>
<comment type="induction">
    <text evidence="6">By interferon.</text>
</comment>
<comment type="disruption phenotype">
    <text evidence="7">High susceptibility to DNA virus infection, such as lethal herpes simplex virus-1 (HSV-1) (PubMed:29426904). Cells are defective in CGAS-mediated type I interferon IFN-beta production upon HSV-1 infection (PubMed:29426904). No susceptibility to RNA virus infection, such as influenza A virus (PubMed:29426904). No visible phenotype in normal conditions (PubMed:29426904).</text>
</comment>
<comment type="similarity">
    <text evidence="9">Belongs to the TRIM/RBCC family.</text>
</comment>
<name>TRI56_MOUSE</name>
<proteinExistence type="evidence at protein level"/>
<keyword id="KW-0002">3D-structure</keyword>
<keyword id="KW-0051">Antiviral defense</keyword>
<keyword id="KW-0175">Coiled coil</keyword>
<keyword id="KW-0963">Cytoplasm</keyword>
<keyword id="KW-0391">Immunity</keyword>
<keyword id="KW-0399">Innate immunity</keyword>
<keyword id="KW-0479">Metal-binding</keyword>
<keyword id="KW-0597">Phosphoprotein</keyword>
<keyword id="KW-1185">Reference proteome</keyword>
<keyword id="KW-0677">Repeat</keyword>
<keyword id="KW-0808">Transferase</keyword>
<keyword id="KW-0833">Ubl conjugation pathway</keyword>
<keyword id="KW-0862">Zinc</keyword>
<keyword id="KW-0863">Zinc-finger</keyword>
<gene>
    <name evidence="8 10" type="primary">Trim56</name>
</gene>
<dbReference type="EC" id="2.3.2.27" evidence="6"/>
<dbReference type="EMBL" id="AK037350">
    <property type="protein sequence ID" value="BAC29792.1"/>
    <property type="molecule type" value="mRNA"/>
</dbReference>
<dbReference type="EMBL" id="BC045615">
    <property type="protein sequence ID" value="AAH45615.1"/>
    <property type="molecule type" value="mRNA"/>
</dbReference>
<dbReference type="CCDS" id="CCDS19762.1"/>
<dbReference type="RefSeq" id="NP_958761.1">
    <property type="nucleotide sequence ID" value="NM_201373.4"/>
</dbReference>
<dbReference type="RefSeq" id="XP_006504504.1">
    <property type="nucleotide sequence ID" value="XM_006504441.3"/>
</dbReference>
<dbReference type="RefSeq" id="XP_011239185.1">
    <property type="nucleotide sequence ID" value="XM_011240883.1"/>
</dbReference>
<dbReference type="PDB" id="8FXF">
    <property type="method" value="X-ray"/>
    <property type="resolution" value="2.80 A"/>
    <property type="chains" value="A/B/C/D=215-303"/>
</dbReference>
<dbReference type="PDBsum" id="8FXF"/>
<dbReference type="SMR" id="Q80VI1"/>
<dbReference type="BioGRID" id="239120">
    <property type="interactions" value="9"/>
</dbReference>
<dbReference type="FunCoup" id="Q80VI1">
    <property type="interactions" value="354"/>
</dbReference>
<dbReference type="IntAct" id="Q80VI1">
    <property type="interactions" value="2"/>
</dbReference>
<dbReference type="MINT" id="Q80VI1"/>
<dbReference type="STRING" id="10090.ENSMUSP00000058109"/>
<dbReference type="iPTMnet" id="Q80VI1"/>
<dbReference type="PhosphoSitePlus" id="Q80VI1"/>
<dbReference type="SwissPalm" id="Q80VI1"/>
<dbReference type="PaxDb" id="10090-ENSMUSP00000058109"/>
<dbReference type="PeptideAtlas" id="Q80VI1"/>
<dbReference type="ProteomicsDB" id="259323"/>
<dbReference type="Pumba" id="Q80VI1"/>
<dbReference type="DNASU" id="384309"/>
<dbReference type="GeneID" id="384309"/>
<dbReference type="KEGG" id="mmu:384309"/>
<dbReference type="UCSC" id="uc009abq.2">
    <property type="organism name" value="mouse"/>
</dbReference>
<dbReference type="AGR" id="MGI:2685298"/>
<dbReference type="CTD" id="81844"/>
<dbReference type="MGI" id="MGI:2685298">
    <property type="gene designation" value="Trim56"/>
</dbReference>
<dbReference type="eggNOG" id="KOG2177">
    <property type="taxonomic scope" value="Eukaryota"/>
</dbReference>
<dbReference type="InParanoid" id="Q80VI1"/>
<dbReference type="OrthoDB" id="264520at2759"/>
<dbReference type="PhylomeDB" id="Q80VI1"/>
<dbReference type="TreeFam" id="TF338323"/>
<dbReference type="Reactome" id="R-MMU-3134975">
    <property type="pathway name" value="Regulation of innate immune responses to cytosolic DNA"/>
</dbReference>
<dbReference type="UniPathway" id="UPA00143"/>
<dbReference type="BioGRID-ORCS" id="384309">
    <property type="hits" value="4 hits in 82 CRISPR screens"/>
</dbReference>
<dbReference type="ChiTaRS" id="Trim56">
    <property type="organism name" value="mouse"/>
</dbReference>
<dbReference type="PRO" id="PR:Q80VI1"/>
<dbReference type="Proteomes" id="UP000000589">
    <property type="component" value="Unplaced"/>
</dbReference>
<dbReference type="RNAct" id="Q80VI1">
    <property type="molecule type" value="protein"/>
</dbReference>
<dbReference type="GO" id="GO:0005737">
    <property type="term" value="C:cytoplasm"/>
    <property type="evidence" value="ECO:0000314"/>
    <property type="project" value="UniProtKB"/>
</dbReference>
<dbReference type="GO" id="GO:0061630">
    <property type="term" value="F:ubiquitin protein ligase activity"/>
    <property type="evidence" value="ECO:0000314"/>
    <property type="project" value="UniProtKB"/>
</dbReference>
<dbReference type="GO" id="GO:0008270">
    <property type="term" value="F:zinc ion binding"/>
    <property type="evidence" value="ECO:0007669"/>
    <property type="project" value="UniProtKB-KW"/>
</dbReference>
<dbReference type="GO" id="GO:0051607">
    <property type="term" value="P:defense response to virus"/>
    <property type="evidence" value="ECO:0000314"/>
    <property type="project" value="UniProtKB"/>
</dbReference>
<dbReference type="GO" id="GO:0046597">
    <property type="term" value="P:host-mediated suppression of symbiont invasion"/>
    <property type="evidence" value="ECO:0000314"/>
    <property type="project" value="UniProtKB"/>
</dbReference>
<dbReference type="GO" id="GO:0045087">
    <property type="term" value="P:innate immune response"/>
    <property type="evidence" value="ECO:0000314"/>
    <property type="project" value="UniProtKB"/>
</dbReference>
<dbReference type="GO" id="GO:0032728">
    <property type="term" value="P:positive regulation of interferon-beta production"/>
    <property type="evidence" value="ECO:0000315"/>
    <property type="project" value="UniProtKB"/>
</dbReference>
<dbReference type="GO" id="GO:0060340">
    <property type="term" value="P:positive regulation of type I interferon-mediated signaling pathway"/>
    <property type="evidence" value="ECO:0000314"/>
    <property type="project" value="UniProtKB"/>
</dbReference>
<dbReference type="GO" id="GO:0070534">
    <property type="term" value="P:protein K63-linked ubiquitination"/>
    <property type="evidence" value="ECO:0000314"/>
    <property type="project" value="UniProtKB"/>
</dbReference>
<dbReference type="GO" id="GO:0006513">
    <property type="term" value="P:protein monoubiquitination"/>
    <property type="evidence" value="ECO:0000314"/>
    <property type="project" value="UniProtKB"/>
</dbReference>
<dbReference type="GO" id="GO:0034340">
    <property type="term" value="P:response to type I interferon"/>
    <property type="evidence" value="ECO:0000314"/>
    <property type="project" value="UniProtKB"/>
</dbReference>
<dbReference type="GO" id="GO:0044790">
    <property type="term" value="P:suppression of viral release by host"/>
    <property type="evidence" value="ECO:0000314"/>
    <property type="project" value="UniProtKB"/>
</dbReference>
<dbReference type="CDD" id="cd19810">
    <property type="entry name" value="Bbox1_TRIM56_C-V"/>
    <property type="match status" value="1"/>
</dbReference>
<dbReference type="CDD" id="cd16584">
    <property type="entry name" value="RING-HC_TRIM56_C-V"/>
    <property type="match status" value="1"/>
</dbReference>
<dbReference type="FunFam" id="2.120.10.30:FF:000050">
    <property type="entry name" value="E3 ubiquitin-protein ligase TRIM56"/>
    <property type="match status" value="1"/>
</dbReference>
<dbReference type="FunFam" id="3.30.160.60:FF:001287">
    <property type="entry name" value="E3 ubiquitin-protein ligase TRIM56"/>
    <property type="match status" value="1"/>
</dbReference>
<dbReference type="FunFam" id="3.30.40.10:FF:000362">
    <property type="entry name" value="E3 ubiquitin-protein ligase TRIM56"/>
    <property type="match status" value="1"/>
</dbReference>
<dbReference type="Gene3D" id="3.30.160.60">
    <property type="entry name" value="Classic Zinc Finger"/>
    <property type="match status" value="1"/>
</dbReference>
<dbReference type="Gene3D" id="2.120.10.30">
    <property type="entry name" value="TolB, C-terminal domain"/>
    <property type="match status" value="1"/>
</dbReference>
<dbReference type="Gene3D" id="3.30.40.10">
    <property type="entry name" value="Zinc/RING finger domain, C3HC4 (zinc finger)"/>
    <property type="match status" value="1"/>
</dbReference>
<dbReference type="InterPro" id="IPR011042">
    <property type="entry name" value="6-blade_b-propeller_TolB-like"/>
</dbReference>
<dbReference type="InterPro" id="IPR047153">
    <property type="entry name" value="TRIM45/56/19-like"/>
</dbReference>
<dbReference type="InterPro" id="IPR027370">
    <property type="entry name" value="Znf-RING_euk"/>
</dbReference>
<dbReference type="InterPro" id="IPR000315">
    <property type="entry name" value="Znf_B-box"/>
</dbReference>
<dbReference type="InterPro" id="IPR001841">
    <property type="entry name" value="Znf_RING"/>
</dbReference>
<dbReference type="InterPro" id="IPR013083">
    <property type="entry name" value="Znf_RING/FYVE/PHD"/>
</dbReference>
<dbReference type="InterPro" id="IPR017907">
    <property type="entry name" value="Znf_RING_CS"/>
</dbReference>
<dbReference type="PANTHER" id="PTHR25462">
    <property type="entry name" value="BONUS, ISOFORM C-RELATED"/>
    <property type="match status" value="1"/>
</dbReference>
<dbReference type="PANTHER" id="PTHR25462:SF299">
    <property type="entry name" value="E3 UBIQUITIN-PROTEIN LIGASE TRIM56"/>
    <property type="match status" value="1"/>
</dbReference>
<dbReference type="Pfam" id="PF00643">
    <property type="entry name" value="zf-B_box"/>
    <property type="match status" value="1"/>
</dbReference>
<dbReference type="Pfam" id="PF13445">
    <property type="entry name" value="zf-RING_UBOX"/>
    <property type="match status" value="1"/>
</dbReference>
<dbReference type="SMART" id="SM00336">
    <property type="entry name" value="BBOX"/>
    <property type="match status" value="1"/>
</dbReference>
<dbReference type="SMART" id="SM00184">
    <property type="entry name" value="RING"/>
    <property type="match status" value="1"/>
</dbReference>
<dbReference type="SUPFAM" id="SSF75011">
    <property type="entry name" value="3-carboxy-cis,cis-mucoante lactonizing enzyme"/>
    <property type="match status" value="1"/>
</dbReference>
<dbReference type="SUPFAM" id="SSF57845">
    <property type="entry name" value="B-box zinc-binding domain"/>
    <property type="match status" value="1"/>
</dbReference>
<dbReference type="SUPFAM" id="SSF57850">
    <property type="entry name" value="RING/U-box"/>
    <property type="match status" value="1"/>
</dbReference>
<dbReference type="PROSITE" id="PS50119">
    <property type="entry name" value="ZF_BBOX"/>
    <property type="match status" value="1"/>
</dbReference>
<dbReference type="PROSITE" id="PS00518">
    <property type="entry name" value="ZF_RING_1"/>
    <property type="match status" value="1"/>
</dbReference>
<dbReference type="PROSITE" id="PS50089">
    <property type="entry name" value="ZF_RING_2"/>
    <property type="match status" value="1"/>
</dbReference>
<feature type="chain" id="PRO_0000056289" description="E3 ubiquitin-protein ligase TRIM56">
    <location>
        <begin position="1"/>
        <end position="734"/>
    </location>
</feature>
<feature type="zinc finger region" description="RING-type" evidence="4">
    <location>
        <begin position="21"/>
        <end position="60"/>
    </location>
</feature>
<feature type="zinc finger region" description="B box-type 1" evidence="3">
    <location>
        <begin position="98"/>
        <end position="149"/>
    </location>
</feature>
<feature type="zinc finger region" description="B box-type 2" evidence="3">
    <location>
        <begin position="164"/>
        <end position="205"/>
    </location>
</feature>
<feature type="region of interest" description="Disordered" evidence="5">
    <location>
        <begin position="372"/>
        <end position="463"/>
    </location>
</feature>
<feature type="coiled-coil region" evidence="2">
    <location>
        <begin position="215"/>
        <end position="303"/>
    </location>
</feature>
<feature type="compositionally biased region" description="Basic and acidic residues" evidence="5">
    <location>
        <begin position="372"/>
        <end position="381"/>
    </location>
</feature>
<feature type="compositionally biased region" description="Basic residues" evidence="5">
    <location>
        <begin position="435"/>
        <end position="448"/>
    </location>
</feature>
<feature type="binding site" evidence="3">
    <location>
        <position position="169"/>
    </location>
    <ligand>
        <name>Zn(2+)</name>
        <dbReference type="ChEBI" id="CHEBI:29105"/>
    </ligand>
</feature>
<feature type="binding site" evidence="3">
    <location>
        <position position="172"/>
    </location>
    <ligand>
        <name>Zn(2+)</name>
        <dbReference type="ChEBI" id="CHEBI:29105"/>
    </ligand>
</feature>
<feature type="binding site" evidence="3">
    <location>
        <position position="192"/>
    </location>
    <ligand>
        <name>Zn(2+)</name>
        <dbReference type="ChEBI" id="CHEBI:29105"/>
    </ligand>
</feature>
<feature type="binding site" evidence="3">
    <location>
        <position position="197"/>
    </location>
    <ligand>
        <name>Zn(2+)</name>
        <dbReference type="ChEBI" id="CHEBI:29105"/>
    </ligand>
</feature>
<feature type="modified residue" description="Phosphoserine" evidence="1">
    <location>
        <position position="454"/>
    </location>
</feature>
<feature type="sequence conflict" description="In Ref. 1; BAC29792." evidence="9" ref="1">
    <original>V</original>
    <variation>D</variation>
    <location>
        <position position="5"/>
    </location>
</feature>
<feature type="helix" evidence="11">
    <location>
        <begin position="227"/>
        <end position="301"/>
    </location>
</feature>
<organism>
    <name type="scientific">Mus musculus</name>
    <name type="common">Mouse</name>
    <dbReference type="NCBI Taxonomy" id="10090"/>
    <lineage>
        <taxon>Eukaryota</taxon>
        <taxon>Metazoa</taxon>
        <taxon>Chordata</taxon>
        <taxon>Craniata</taxon>
        <taxon>Vertebrata</taxon>
        <taxon>Euteleostomi</taxon>
        <taxon>Mammalia</taxon>
        <taxon>Eutheria</taxon>
        <taxon>Euarchontoglires</taxon>
        <taxon>Glires</taxon>
        <taxon>Rodentia</taxon>
        <taxon>Myomorpha</taxon>
        <taxon>Muroidea</taxon>
        <taxon>Muridae</taxon>
        <taxon>Murinae</taxon>
        <taxon>Mus</taxon>
        <taxon>Mus</taxon>
    </lineage>
</organism>
<accession>Q80VI1</accession>
<accession>Q8CAY0</accession>
<protein>
    <recommendedName>
        <fullName evidence="9">E3 ubiquitin-protein ligase TRIM56</fullName>
        <ecNumber evidence="6">2.3.2.27</ecNumber>
    </recommendedName>
    <alternativeName>
        <fullName>Tripartite motif-containing protein 56</fullName>
    </alternativeName>
</protein>